<feature type="chain" id="PRO_1000086212" description="Small ribosomal subunit protein uS11">
    <location>
        <begin position="1"/>
        <end position="130"/>
    </location>
</feature>
<comment type="function">
    <text evidence="1">Located on the platform of the 30S subunit, it bridges several disparate RNA helices of the 16S rRNA. Forms part of the Shine-Dalgarno cleft in the 70S ribosome.</text>
</comment>
<comment type="subunit">
    <text evidence="1">Part of the 30S ribosomal subunit. Interacts with proteins S7 and S18. Binds to IF-3.</text>
</comment>
<comment type="similarity">
    <text evidence="1">Belongs to the universal ribosomal protein uS11 family.</text>
</comment>
<organism>
    <name type="scientific">Shewanella pealeana (strain ATCC 700345 / ANG-SQ1)</name>
    <dbReference type="NCBI Taxonomy" id="398579"/>
    <lineage>
        <taxon>Bacteria</taxon>
        <taxon>Pseudomonadati</taxon>
        <taxon>Pseudomonadota</taxon>
        <taxon>Gammaproteobacteria</taxon>
        <taxon>Alteromonadales</taxon>
        <taxon>Shewanellaceae</taxon>
        <taxon>Shewanella</taxon>
    </lineage>
</organism>
<dbReference type="EMBL" id="CP000851">
    <property type="protein sequence ID" value="ABV85535.1"/>
    <property type="molecule type" value="Genomic_DNA"/>
</dbReference>
<dbReference type="RefSeq" id="WP_012153476.1">
    <property type="nucleotide sequence ID" value="NC_009901.1"/>
</dbReference>
<dbReference type="SMR" id="A8GYZ8"/>
<dbReference type="STRING" id="398579.Spea_0207"/>
<dbReference type="KEGG" id="spl:Spea_0207"/>
<dbReference type="eggNOG" id="COG0100">
    <property type="taxonomic scope" value="Bacteria"/>
</dbReference>
<dbReference type="HOGENOM" id="CLU_072439_5_0_6"/>
<dbReference type="OrthoDB" id="9806415at2"/>
<dbReference type="Proteomes" id="UP000002608">
    <property type="component" value="Chromosome"/>
</dbReference>
<dbReference type="GO" id="GO:1990904">
    <property type="term" value="C:ribonucleoprotein complex"/>
    <property type="evidence" value="ECO:0007669"/>
    <property type="project" value="UniProtKB-KW"/>
</dbReference>
<dbReference type="GO" id="GO:0005840">
    <property type="term" value="C:ribosome"/>
    <property type="evidence" value="ECO:0007669"/>
    <property type="project" value="UniProtKB-KW"/>
</dbReference>
<dbReference type="GO" id="GO:0019843">
    <property type="term" value="F:rRNA binding"/>
    <property type="evidence" value="ECO:0007669"/>
    <property type="project" value="UniProtKB-UniRule"/>
</dbReference>
<dbReference type="GO" id="GO:0003735">
    <property type="term" value="F:structural constituent of ribosome"/>
    <property type="evidence" value="ECO:0007669"/>
    <property type="project" value="InterPro"/>
</dbReference>
<dbReference type="GO" id="GO:0006412">
    <property type="term" value="P:translation"/>
    <property type="evidence" value="ECO:0007669"/>
    <property type="project" value="UniProtKB-UniRule"/>
</dbReference>
<dbReference type="FunFam" id="3.30.420.80:FF:000001">
    <property type="entry name" value="30S ribosomal protein S11"/>
    <property type="match status" value="1"/>
</dbReference>
<dbReference type="Gene3D" id="3.30.420.80">
    <property type="entry name" value="Ribosomal protein S11"/>
    <property type="match status" value="1"/>
</dbReference>
<dbReference type="HAMAP" id="MF_01310">
    <property type="entry name" value="Ribosomal_uS11"/>
    <property type="match status" value="1"/>
</dbReference>
<dbReference type="InterPro" id="IPR001971">
    <property type="entry name" value="Ribosomal_uS11"/>
</dbReference>
<dbReference type="InterPro" id="IPR019981">
    <property type="entry name" value="Ribosomal_uS11_bac-type"/>
</dbReference>
<dbReference type="InterPro" id="IPR018102">
    <property type="entry name" value="Ribosomal_uS11_CS"/>
</dbReference>
<dbReference type="InterPro" id="IPR036967">
    <property type="entry name" value="Ribosomal_uS11_sf"/>
</dbReference>
<dbReference type="NCBIfam" id="NF003698">
    <property type="entry name" value="PRK05309.1"/>
    <property type="match status" value="1"/>
</dbReference>
<dbReference type="NCBIfam" id="TIGR03632">
    <property type="entry name" value="uS11_bact"/>
    <property type="match status" value="1"/>
</dbReference>
<dbReference type="PANTHER" id="PTHR11759">
    <property type="entry name" value="40S RIBOSOMAL PROTEIN S14/30S RIBOSOMAL PROTEIN S11"/>
    <property type="match status" value="1"/>
</dbReference>
<dbReference type="Pfam" id="PF00411">
    <property type="entry name" value="Ribosomal_S11"/>
    <property type="match status" value="1"/>
</dbReference>
<dbReference type="PIRSF" id="PIRSF002131">
    <property type="entry name" value="Ribosomal_S11"/>
    <property type="match status" value="1"/>
</dbReference>
<dbReference type="SUPFAM" id="SSF53137">
    <property type="entry name" value="Translational machinery components"/>
    <property type="match status" value="1"/>
</dbReference>
<dbReference type="PROSITE" id="PS00054">
    <property type="entry name" value="RIBOSOMAL_S11"/>
    <property type="match status" value="1"/>
</dbReference>
<proteinExistence type="inferred from homology"/>
<evidence type="ECO:0000255" key="1">
    <source>
        <dbReference type="HAMAP-Rule" id="MF_01310"/>
    </source>
</evidence>
<evidence type="ECO:0000305" key="2"/>
<sequence length="130" mass="13938">MAKVPSRSPRKRVRKQVADGMAHIHASFNNTIITITDRQGNALSWATSGGSGFRGSRKSTPFAAQVAAERAGTAAQDYGVKNLEVFVKGPGPGRESAIRALNSVGYKITNITDVTPIPHNGCRPPKKRRV</sequence>
<name>RS11_SHEPA</name>
<protein>
    <recommendedName>
        <fullName evidence="1">Small ribosomal subunit protein uS11</fullName>
    </recommendedName>
    <alternativeName>
        <fullName evidence="2">30S ribosomal protein S11</fullName>
    </alternativeName>
</protein>
<reference key="1">
    <citation type="submission" date="2007-10" db="EMBL/GenBank/DDBJ databases">
        <title>Complete sequence of Shewanella pealeana ATCC 700345.</title>
        <authorList>
            <consortium name="US DOE Joint Genome Institute"/>
            <person name="Copeland A."/>
            <person name="Lucas S."/>
            <person name="Lapidus A."/>
            <person name="Barry K."/>
            <person name="Glavina del Rio T."/>
            <person name="Dalin E."/>
            <person name="Tice H."/>
            <person name="Pitluck S."/>
            <person name="Chertkov O."/>
            <person name="Brettin T."/>
            <person name="Bruce D."/>
            <person name="Detter J.C."/>
            <person name="Han C."/>
            <person name="Schmutz J."/>
            <person name="Larimer F."/>
            <person name="Land M."/>
            <person name="Hauser L."/>
            <person name="Kyrpides N."/>
            <person name="Kim E."/>
            <person name="Zhao J.-S.Z."/>
            <person name="Manno D."/>
            <person name="Hawari J."/>
            <person name="Richardson P."/>
        </authorList>
    </citation>
    <scope>NUCLEOTIDE SEQUENCE [LARGE SCALE GENOMIC DNA]</scope>
    <source>
        <strain>ATCC 700345 / ANG-SQ1</strain>
    </source>
</reference>
<keyword id="KW-1185">Reference proteome</keyword>
<keyword id="KW-0687">Ribonucleoprotein</keyword>
<keyword id="KW-0689">Ribosomal protein</keyword>
<keyword id="KW-0694">RNA-binding</keyword>
<keyword id="KW-0699">rRNA-binding</keyword>
<gene>
    <name evidence="1" type="primary">rpsK</name>
    <name type="ordered locus">Spea_0207</name>
</gene>
<accession>A8GYZ8</accession>